<organism>
    <name type="scientific">Homo sapiens</name>
    <name type="common">Human</name>
    <dbReference type="NCBI Taxonomy" id="9606"/>
    <lineage>
        <taxon>Eukaryota</taxon>
        <taxon>Metazoa</taxon>
        <taxon>Chordata</taxon>
        <taxon>Craniata</taxon>
        <taxon>Vertebrata</taxon>
        <taxon>Euteleostomi</taxon>
        <taxon>Mammalia</taxon>
        <taxon>Eutheria</taxon>
        <taxon>Euarchontoglires</taxon>
        <taxon>Primates</taxon>
        <taxon>Haplorrhini</taxon>
        <taxon>Catarrhini</taxon>
        <taxon>Hominidae</taxon>
        <taxon>Homo</taxon>
    </lineage>
</organism>
<comment type="function">
    <text evidence="1 5">Adapter that functions to localize a calcium-sensitive signal transduction machinery in sperm to a calcium-permeable ion channel (By similarity). Microtubule inner protein (MIP) part of the dynein-decorated doublet microtubules (DMTs) in cilia axoneme, which is required for motile cilia beating (PubMed:36191189).</text>
</comment>
<comment type="subunit">
    <text evidence="1 4">Microtubule inner protein component of sperm flagellar doublet microtubules (By similarity). Binds calmodulin via its IQ domain. Interacts with TRPC1, TRPC2, TRPC5, but not TRPC3 (By similarity). Interacts with CFAP45 (PubMed:33139725).</text>
</comment>
<comment type="interaction">
    <interactant intactId="EBI-9246952">
        <id>Q8TC29</id>
    </interactant>
    <interactant intactId="EBI-21535880">
        <id>Q92870-2</id>
        <label>APBB2</label>
    </interactant>
    <organismsDiffer>false</organismsDiffer>
    <experiments>3</experiments>
</comment>
<comment type="interaction">
    <interactant intactId="EBI-9246952">
        <id>Q8TC29</id>
    </interactant>
    <interactant intactId="EBI-930964">
        <id>P54253</id>
        <label>ATXN1</label>
    </interactant>
    <organismsDiffer>false</organismsDiffer>
    <experiments>6</experiments>
</comment>
<comment type="interaction">
    <interactant intactId="EBI-9246952">
        <id>Q8TC29</id>
    </interactant>
    <interactant intactId="EBI-13039584">
        <id>Q9UL16</id>
        <label>CFAP45</label>
    </interactant>
    <organismsDiffer>false</organismsDiffer>
    <experiments>3</experiments>
</comment>
<comment type="interaction">
    <interactant intactId="EBI-9246952">
        <id>Q8TC29</id>
    </interactant>
    <interactant intactId="EBI-25840379">
        <id>Q14203-5</id>
        <label>DCTN1</label>
    </interactant>
    <organismsDiffer>false</organismsDiffer>
    <experiments>3</experiments>
</comment>
<comment type="interaction">
    <interactant intactId="EBI-9246952">
        <id>Q8TC29</id>
    </interactant>
    <interactant intactId="EBI-517086">
        <id>O43464</id>
        <label>HTRA2</label>
    </interactant>
    <organismsDiffer>false</organismsDiffer>
    <experiments>3</experiments>
</comment>
<comment type="interaction">
    <interactant intactId="EBI-9246952">
        <id>Q8TC29</id>
    </interactant>
    <interactant intactId="EBI-466029">
        <id>P42858</id>
        <label>HTT</label>
    </interactant>
    <organismsDiffer>false</organismsDiffer>
    <experiments>6</experiments>
</comment>
<comment type="interaction">
    <interactant intactId="EBI-9246952">
        <id>Q8TC29</id>
    </interactant>
    <interactant intactId="EBI-50433196">
        <id>A0A6Q8PF08</id>
        <label>PMP22</label>
    </interactant>
    <organismsDiffer>false</organismsDiffer>
    <experiments>3</experiments>
</comment>
<comment type="interaction">
    <interactant intactId="EBI-9246952">
        <id>Q8TC29</id>
    </interactant>
    <interactant intactId="EBI-21251460">
        <id>O60260-5</id>
        <label>PRKN</label>
    </interactant>
    <organismsDiffer>false</organismsDiffer>
    <experiments>6</experiments>
</comment>
<comment type="interaction">
    <interactant intactId="EBI-9246952">
        <id>Q8TC29</id>
    </interactant>
    <interactant intactId="EBI-752074">
        <id>P41219</id>
        <label>PRPH</label>
    </interactant>
    <organismsDiffer>false</organismsDiffer>
    <experiments>3</experiments>
</comment>
<comment type="interaction">
    <interactant intactId="EBI-9246952">
        <id>Q8TC29</id>
    </interactant>
    <interactant intactId="EBI-985879">
        <id>P37840</id>
        <label>SNCA</label>
    </interactant>
    <organismsDiffer>false</organismsDiffer>
    <experiments>3</experiments>
</comment>
<comment type="interaction">
    <interactant intactId="EBI-9246952">
        <id>Q8TC29</id>
    </interactant>
    <interactant intactId="EBI-990792">
        <id>P00441</id>
        <label>SOD1</label>
    </interactant>
    <organismsDiffer>false</organismsDiffer>
    <experiments>3</experiments>
</comment>
<comment type="interaction">
    <interactant intactId="EBI-9246952">
        <id>Q8TC29</id>
    </interactant>
    <interactant intactId="EBI-372899">
        <id>Q13148</id>
        <label>TARDBP</label>
    </interactant>
    <organismsDiffer>false</organismsDiffer>
    <experiments>6</experiments>
</comment>
<comment type="interaction">
    <interactant intactId="EBI-9246952">
        <id>Q8TC29</id>
    </interactant>
    <interactant intactId="EBI-714860">
        <id>P09936</id>
        <label>UCHL1</label>
    </interactant>
    <organismsDiffer>false</organismsDiffer>
    <experiments>3</experiments>
</comment>
<comment type="subcellular location">
    <subcellularLocation>
        <location evidence="5">Cytoplasm</location>
        <location evidence="5">Cytoskeleton</location>
        <location evidence="5">Cilium axoneme</location>
    </subcellularLocation>
    <subcellularLocation>
        <location evidence="1">Cytoplasm</location>
        <location evidence="1">Cytoskeleton</location>
        <location evidence="1">Flagellum axoneme</location>
    </subcellularLocation>
    <text evidence="1">Sperm acrosomal crescent and flagellar principal piece.</text>
</comment>
<comment type="tissue specificity">
    <text evidence="5">Expressed in airway epithelial cells.</text>
</comment>
<comment type="domain">
    <text evidence="1">The IQ motif is involved in calmodulin binding.</text>
</comment>
<reference key="1">
    <citation type="journal article" date="2004" name="Dev. Biol.">
        <title>Enkurin is a novel calmodulin and TRPC channel binding protein in sperm.</title>
        <authorList>
            <person name="Sutton K.A."/>
            <person name="Jungnickel M.K."/>
            <person name="Wang Y."/>
            <person name="Cullen K."/>
            <person name="Lambert S."/>
            <person name="Florman H.M."/>
        </authorList>
    </citation>
    <scope>NUCLEOTIDE SEQUENCE [MRNA]</scope>
    <source>
        <tissue>Testis</tissue>
    </source>
</reference>
<reference key="2">
    <citation type="journal article" date="2004" name="Nat. Genet.">
        <title>Complete sequencing and characterization of 21,243 full-length human cDNAs.</title>
        <authorList>
            <person name="Ota T."/>
            <person name="Suzuki Y."/>
            <person name="Nishikawa T."/>
            <person name="Otsuki T."/>
            <person name="Sugiyama T."/>
            <person name="Irie R."/>
            <person name="Wakamatsu A."/>
            <person name="Hayashi K."/>
            <person name="Sato H."/>
            <person name="Nagai K."/>
            <person name="Kimura K."/>
            <person name="Makita H."/>
            <person name="Sekine M."/>
            <person name="Obayashi M."/>
            <person name="Nishi T."/>
            <person name="Shibahara T."/>
            <person name="Tanaka T."/>
            <person name="Ishii S."/>
            <person name="Yamamoto J."/>
            <person name="Saito K."/>
            <person name="Kawai Y."/>
            <person name="Isono Y."/>
            <person name="Nakamura Y."/>
            <person name="Nagahari K."/>
            <person name="Murakami K."/>
            <person name="Yasuda T."/>
            <person name="Iwayanagi T."/>
            <person name="Wagatsuma M."/>
            <person name="Shiratori A."/>
            <person name="Sudo H."/>
            <person name="Hosoiri T."/>
            <person name="Kaku Y."/>
            <person name="Kodaira H."/>
            <person name="Kondo H."/>
            <person name="Sugawara M."/>
            <person name="Takahashi M."/>
            <person name="Kanda K."/>
            <person name="Yokoi T."/>
            <person name="Furuya T."/>
            <person name="Kikkawa E."/>
            <person name="Omura Y."/>
            <person name="Abe K."/>
            <person name="Kamihara K."/>
            <person name="Katsuta N."/>
            <person name="Sato K."/>
            <person name="Tanikawa M."/>
            <person name="Yamazaki M."/>
            <person name="Ninomiya K."/>
            <person name="Ishibashi T."/>
            <person name="Yamashita H."/>
            <person name="Murakawa K."/>
            <person name="Fujimori K."/>
            <person name="Tanai H."/>
            <person name="Kimata M."/>
            <person name="Watanabe M."/>
            <person name="Hiraoka S."/>
            <person name="Chiba Y."/>
            <person name="Ishida S."/>
            <person name="Ono Y."/>
            <person name="Takiguchi S."/>
            <person name="Watanabe S."/>
            <person name="Yosida M."/>
            <person name="Hotuta T."/>
            <person name="Kusano J."/>
            <person name="Kanehori K."/>
            <person name="Takahashi-Fujii A."/>
            <person name="Hara H."/>
            <person name="Tanase T.-O."/>
            <person name="Nomura Y."/>
            <person name="Togiya S."/>
            <person name="Komai F."/>
            <person name="Hara R."/>
            <person name="Takeuchi K."/>
            <person name="Arita M."/>
            <person name="Imose N."/>
            <person name="Musashino K."/>
            <person name="Yuuki H."/>
            <person name="Oshima A."/>
            <person name="Sasaki N."/>
            <person name="Aotsuka S."/>
            <person name="Yoshikawa Y."/>
            <person name="Matsunawa H."/>
            <person name="Ichihara T."/>
            <person name="Shiohata N."/>
            <person name="Sano S."/>
            <person name="Moriya S."/>
            <person name="Momiyama H."/>
            <person name="Satoh N."/>
            <person name="Takami S."/>
            <person name="Terashima Y."/>
            <person name="Suzuki O."/>
            <person name="Nakagawa S."/>
            <person name="Senoh A."/>
            <person name="Mizoguchi H."/>
            <person name="Goto Y."/>
            <person name="Shimizu F."/>
            <person name="Wakebe H."/>
            <person name="Hishigaki H."/>
            <person name="Watanabe T."/>
            <person name="Sugiyama A."/>
            <person name="Takemoto M."/>
            <person name="Kawakami B."/>
            <person name="Yamazaki M."/>
            <person name="Watanabe K."/>
            <person name="Kumagai A."/>
            <person name="Itakura S."/>
            <person name="Fukuzumi Y."/>
            <person name="Fujimori Y."/>
            <person name="Komiyama M."/>
            <person name="Tashiro H."/>
            <person name="Tanigami A."/>
            <person name="Fujiwara T."/>
            <person name="Ono T."/>
            <person name="Yamada K."/>
            <person name="Fujii Y."/>
            <person name="Ozaki K."/>
            <person name="Hirao M."/>
            <person name="Ohmori Y."/>
            <person name="Kawabata A."/>
            <person name="Hikiji T."/>
            <person name="Kobatake N."/>
            <person name="Inagaki H."/>
            <person name="Ikema Y."/>
            <person name="Okamoto S."/>
            <person name="Okitani R."/>
            <person name="Kawakami T."/>
            <person name="Noguchi S."/>
            <person name="Itoh T."/>
            <person name="Shigeta K."/>
            <person name="Senba T."/>
            <person name="Matsumura K."/>
            <person name="Nakajima Y."/>
            <person name="Mizuno T."/>
            <person name="Morinaga M."/>
            <person name="Sasaki M."/>
            <person name="Togashi T."/>
            <person name="Oyama M."/>
            <person name="Hata H."/>
            <person name="Watanabe M."/>
            <person name="Komatsu T."/>
            <person name="Mizushima-Sugano J."/>
            <person name="Satoh T."/>
            <person name="Shirai Y."/>
            <person name="Takahashi Y."/>
            <person name="Nakagawa K."/>
            <person name="Okumura K."/>
            <person name="Nagase T."/>
            <person name="Nomura N."/>
            <person name="Kikuchi H."/>
            <person name="Masuho Y."/>
            <person name="Yamashita R."/>
            <person name="Nakai K."/>
            <person name="Yada T."/>
            <person name="Nakamura Y."/>
            <person name="Ohara O."/>
            <person name="Isogai T."/>
            <person name="Sugano S."/>
        </authorList>
    </citation>
    <scope>NUCLEOTIDE SEQUENCE [LARGE SCALE MRNA]</scope>
    <source>
        <tissue>Hippocampus</tissue>
        <tissue>Testis</tissue>
    </source>
</reference>
<reference key="3">
    <citation type="journal article" date="2004" name="Nature">
        <title>The DNA sequence and comparative analysis of human chromosome 10.</title>
        <authorList>
            <person name="Deloukas P."/>
            <person name="Earthrowl M.E."/>
            <person name="Grafham D.V."/>
            <person name="Rubenfield M."/>
            <person name="French L."/>
            <person name="Steward C.A."/>
            <person name="Sims S.K."/>
            <person name="Jones M.C."/>
            <person name="Searle S."/>
            <person name="Scott C."/>
            <person name="Howe K."/>
            <person name="Hunt S.E."/>
            <person name="Andrews T.D."/>
            <person name="Gilbert J.G.R."/>
            <person name="Swarbreck D."/>
            <person name="Ashurst J.L."/>
            <person name="Taylor A."/>
            <person name="Battles J."/>
            <person name="Bird C.P."/>
            <person name="Ainscough R."/>
            <person name="Almeida J.P."/>
            <person name="Ashwell R.I.S."/>
            <person name="Ambrose K.D."/>
            <person name="Babbage A.K."/>
            <person name="Bagguley C.L."/>
            <person name="Bailey J."/>
            <person name="Banerjee R."/>
            <person name="Bates K."/>
            <person name="Beasley H."/>
            <person name="Bray-Allen S."/>
            <person name="Brown A.J."/>
            <person name="Brown J.Y."/>
            <person name="Burford D.C."/>
            <person name="Burrill W."/>
            <person name="Burton J."/>
            <person name="Cahill P."/>
            <person name="Camire D."/>
            <person name="Carter N.P."/>
            <person name="Chapman J.C."/>
            <person name="Clark S.Y."/>
            <person name="Clarke G."/>
            <person name="Clee C.M."/>
            <person name="Clegg S."/>
            <person name="Corby N."/>
            <person name="Coulson A."/>
            <person name="Dhami P."/>
            <person name="Dutta I."/>
            <person name="Dunn M."/>
            <person name="Faulkner L."/>
            <person name="Frankish A."/>
            <person name="Frankland J.A."/>
            <person name="Garner P."/>
            <person name="Garnett J."/>
            <person name="Gribble S."/>
            <person name="Griffiths C."/>
            <person name="Grocock R."/>
            <person name="Gustafson E."/>
            <person name="Hammond S."/>
            <person name="Harley J.L."/>
            <person name="Hart E."/>
            <person name="Heath P.D."/>
            <person name="Ho T.P."/>
            <person name="Hopkins B."/>
            <person name="Horne J."/>
            <person name="Howden P.J."/>
            <person name="Huckle E."/>
            <person name="Hynds C."/>
            <person name="Johnson C."/>
            <person name="Johnson D."/>
            <person name="Kana A."/>
            <person name="Kay M."/>
            <person name="Kimberley A.M."/>
            <person name="Kershaw J.K."/>
            <person name="Kokkinaki M."/>
            <person name="Laird G.K."/>
            <person name="Lawlor S."/>
            <person name="Lee H.M."/>
            <person name="Leongamornlert D.A."/>
            <person name="Laird G."/>
            <person name="Lloyd C."/>
            <person name="Lloyd D.M."/>
            <person name="Loveland J."/>
            <person name="Lovell J."/>
            <person name="McLaren S."/>
            <person name="McLay K.E."/>
            <person name="McMurray A."/>
            <person name="Mashreghi-Mohammadi M."/>
            <person name="Matthews L."/>
            <person name="Milne S."/>
            <person name="Nickerson T."/>
            <person name="Nguyen M."/>
            <person name="Overton-Larty E."/>
            <person name="Palmer S.A."/>
            <person name="Pearce A.V."/>
            <person name="Peck A.I."/>
            <person name="Pelan S."/>
            <person name="Phillimore B."/>
            <person name="Porter K."/>
            <person name="Rice C.M."/>
            <person name="Rogosin A."/>
            <person name="Ross M.T."/>
            <person name="Sarafidou T."/>
            <person name="Sehra H.K."/>
            <person name="Shownkeen R."/>
            <person name="Skuce C.D."/>
            <person name="Smith M."/>
            <person name="Standring L."/>
            <person name="Sycamore N."/>
            <person name="Tester J."/>
            <person name="Thorpe A."/>
            <person name="Torcasso W."/>
            <person name="Tracey A."/>
            <person name="Tromans A."/>
            <person name="Tsolas J."/>
            <person name="Wall M."/>
            <person name="Walsh J."/>
            <person name="Wang H."/>
            <person name="Weinstock K."/>
            <person name="West A.P."/>
            <person name="Willey D.L."/>
            <person name="Whitehead S.L."/>
            <person name="Wilming L."/>
            <person name="Wray P.W."/>
            <person name="Young L."/>
            <person name="Chen Y."/>
            <person name="Lovering R.C."/>
            <person name="Moschonas N.K."/>
            <person name="Siebert R."/>
            <person name="Fechtel K."/>
            <person name="Bentley D."/>
            <person name="Durbin R.M."/>
            <person name="Hubbard T."/>
            <person name="Doucette-Stamm L."/>
            <person name="Beck S."/>
            <person name="Smith D.R."/>
            <person name="Rogers J."/>
        </authorList>
    </citation>
    <scope>NUCLEOTIDE SEQUENCE [LARGE SCALE GENOMIC DNA]</scope>
</reference>
<reference key="4">
    <citation type="submission" date="2005-09" db="EMBL/GenBank/DDBJ databases">
        <authorList>
            <person name="Mural R.J."/>
            <person name="Istrail S."/>
            <person name="Sutton G.G."/>
            <person name="Florea L."/>
            <person name="Halpern A.L."/>
            <person name="Mobarry C.M."/>
            <person name="Lippert R."/>
            <person name="Walenz B."/>
            <person name="Shatkay H."/>
            <person name="Dew I."/>
            <person name="Miller J.R."/>
            <person name="Flanigan M.J."/>
            <person name="Edwards N.J."/>
            <person name="Bolanos R."/>
            <person name="Fasulo D."/>
            <person name="Halldorsson B.V."/>
            <person name="Hannenhalli S."/>
            <person name="Turner R."/>
            <person name="Yooseph S."/>
            <person name="Lu F."/>
            <person name="Nusskern D.R."/>
            <person name="Shue B.C."/>
            <person name="Zheng X.H."/>
            <person name="Zhong F."/>
            <person name="Delcher A.L."/>
            <person name="Huson D.H."/>
            <person name="Kravitz S.A."/>
            <person name="Mouchard L."/>
            <person name="Reinert K."/>
            <person name="Remington K.A."/>
            <person name="Clark A.G."/>
            <person name="Waterman M.S."/>
            <person name="Eichler E.E."/>
            <person name="Adams M.D."/>
            <person name="Hunkapiller M.W."/>
            <person name="Myers E.W."/>
            <person name="Venter J.C."/>
        </authorList>
    </citation>
    <scope>NUCLEOTIDE SEQUENCE [LARGE SCALE GENOMIC DNA]</scope>
</reference>
<reference key="5">
    <citation type="journal article" date="2004" name="Genome Res.">
        <title>The status, quality, and expansion of the NIH full-length cDNA project: the Mammalian Gene Collection (MGC).</title>
        <authorList>
            <consortium name="The MGC Project Team"/>
        </authorList>
    </citation>
    <scope>NUCLEOTIDE SEQUENCE [LARGE SCALE MRNA]</scope>
    <source>
        <tissue>Testis</tissue>
    </source>
</reference>
<reference key="6">
    <citation type="journal article" date="2020" name="Nat. Commun.">
        <title>CFAP45 deficiency causes situs abnormalities and asthenospermia by disrupting an axonemal adenine nucleotide homeostasis module.</title>
        <authorList>
            <person name="Dougherty G.W."/>
            <person name="Mizuno K."/>
            <person name="Noethe-Menchen T."/>
            <person name="Ikawa Y."/>
            <person name="Boldt K."/>
            <person name="Ta-Shma A."/>
            <person name="Aprea I."/>
            <person name="Minegishi K."/>
            <person name="Pang Y.P."/>
            <person name="Pennekamp P."/>
            <person name="Loges N.T."/>
            <person name="Raidt J."/>
            <person name="Hjeij R."/>
            <person name="Wallmeier J."/>
            <person name="Mussaffi H."/>
            <person name="Perles Z."/>
            <person name="Elpeleg O."/>
            <person name="Rabert F."/>
            <person name="Shiratori H."/>
            <person name="Letteboer S.J."/>
            <person name="Horn N."/>
            <person name="Young S."/>
            <person name="Struenker T."/>
            <person name="Stumme F."/>
            <person name="Werner C."/>
            <person name="Olbrich H."/>
            <person name="Takaoka K."/>
            <person name="Ide T."/>
            <person name="Twan W.K."/>
            <person name="Biebach L."/>
            <person name="Grosse-Onnebrink J."/>
            <person name="Klinkenbusch J.A."/>
            <person name="Praveen K."/>
            <person name="Bracht D.C."/>
            <person name="Hoeben I.M."/>
            <person name="Junger K."/>
            <person name="Guetzlaff J."/>
            <person name="Cindric S."/>
            <person name="Aviram M."/>
            <person name="Kaiser T."/>
            <person name="Memari Y."/>
            <person name="Dzeja P.P."/>
            <person name="Dworniczak B."/>
            <person name="Ueffing M."/>
            <person name="Roepman R."/>
            <person name="Bartscherer K."/>
            <person name="Katsanis N."/>
            <person name="Davis E.E."/>
            <person name="Amirav I."/>
            <person name="Hamada H."/>
            <person name="Omran H."/>
        </authorList>
    </citation>
    <scope>INTERACTION WITH CFAP45</scope>
</reference>
<reference evidence="7" key="7">
    <citation type="journal article" date="2022" name="Proc. Natl. Acad. Sci. U.S.A.">
        <title>SPACA9 is a lumenal protein of human ciliary singlet and doublet microtubules.</title>
        <authorList>
            <person name="Gui M."/>
            <person name="Croft J.T."/>
            <person name="Zabeo D."/>
            <person name="Acharya V."/>
            <person name="Kollman J.M."/>
            <person name="Burgoyne T."/>
            <person name="Hoog J.L."/>
            <person name="Brown A."/>
        </authorList>
    </citation>
    <scope>STRUCTURE BY ELECTRON MICROSCOPY (3.60 ANGSTROMS)</scope>
    <scope>FUNCTION</scope>
    <scope>SUBCELLULAR LOCATION</scope>
    <scope>TISSUE SPECIFICITY</scope>
</reference>
<proteinExistence type="evidence at protein level"/>
<sequence length="256" mass="29454">MDPTCSSECIYNLIPSDLKEPPQPPRYISIFKATVKDDMQKAKTAMKTMGPAKVEVPSPKDFLKKHSKEKTLPPKKNFDRNVPKKPAVPLKTDHPVMGIQSGKNFINTNAADIIMGVAKKPKPIYVDKRTGDKHDLEPSGLVPKYINKKDYGVTPEYICKRNEEIKKAQEDYDRYIQENLKKAAMKRLSDEEREAVLQGLKKNWEEVHKEFQSLSVFIDSIPKKIRKQRLEEEMKQLEHDIGIIEKHKIIYIANNA</sequence>
<evidence type="ECO:0000250" key="1">
    <source>
        <dbReference type="UniProtKB" id="Q6SP97"/>
    </source>
</evidence>
<evidence type="ECO:0000255" key="2"/>
<evidence type="ECO:0000255" key="3">
    <source>
        <dbReference type="PROSITE-ProRule" id="PRU01000"/>
    </source>
</evidence>
<evidence type="ECO:0000269" key="4">
    <source>
    </source>
</evidence>
<evidence type="ECO:0000269" key="5">
    <source>
    </source>
</evidence>
<evidence type="ECO:0000312" key="6">
    <source>
        <dbReference type="HGNC" id="HGNC:28388"/>
    </source>
</evidence>
<evidence type="ECO:0007744" key="7">
    <source>
        <dbReference type="PDB" id="7UNG"/>
    </source>
</evidence>
<name>ENKUR_HUMAN</name>
<gene>
    <name evidence="6" type="primary">ENKUR</name>
    <name type="synonym">C10orf63</name>
</gene>
<accession>Q8TC29</accession>
<accession>A8K8Y0</accession>
<accession>D3DRV2</accession>
<feature type="chain" id="PRO_0000086975" description="Enkurin">
    <location>
        <begin position="1"/>
        <end position="256"/>
    </location>
</feature>
<feature type="domain" description="Enkurin" evidence="3">
    <location>
        <begin position="160"/>
        <end position="252"/>
    </location>
</feature>
<feature type="domain" description="IQ">
    <location>
        <begin position="176"/>
        <end position="187"/>
    </location>
</feature>
<feature type="region of interest" description="Interaction with TRPC proteins" evidence="1">
    <location>
        <begin position="160"/>
        <end position="255"/>
    </location>
</feature>
<feature type="short sequence motif" description="SH3-binding" evidence="2">
    <location>
        <begin position="83"/>
        <end position="89"/>
    </location>
</feature>
<keyword id="KW-0002">3D-structure</keyword>
<keyword id="KW-0112">Calmodulin-binding</keyword>
<keyword id="KW-0966">Cell projection</keyword>
<keyword id="KW-0969">Cilium</keyword>
<keyword id="KW-0963">Cytoplasm</keyword>
<keyword id="KW-0206">Cytoskeleton</keyword>
<keyword id="KW-0282">Flagellum</keyword>
<keyword id="KW-1267">Proteomics identification</keyword>
<keyword id="KW-1185">Reference proteome</keyword>
<keyword id="KW-0729">SH3-binding</keyword>
<dbReference type="EMBL" id="AY454125">
    <property type="protein sequence ID" value="AAS45168.1"/>
    <property type="molecule type" value="mRNA"/>
</dbReference>
<dbReference type="EMBL" id="AK095021">
    <property type="protein sequence ID" value="BAC04477.1"/>
    <property type="molecule type" value="mRNA"/>
</dbReference>
<dbReference type="EMBL" id="AK292495">
    <property type="protein sequence ID" value="BAF85184.1"/>
    <property type="molecule type" value="mRNA"/>
</dbReference>
<dbReference type="EMBL" id="AL512598">
    <property type="status" value="NOT_ANNOTATED_CDS"/>
    <property type="molecule type" value="Genomic_DNA"/>
</dbReference>
<dbReference type="EMBL" id="CH471072">
    <property type="protein sequence ID" value="EAW86115.1"/>
    <property type="molecule type" value="Genomic_DNA"/>
</dbReference>
<dbReference type="EMBL" id="CH471072">
    <property type="protein sequence ID" value="EAW86116.1"/>
    <property type="molecule type" value="Genomic_DNA"/>
</dbReference>
<dbReference type="EMBL" id="BC026165">
    <property type="protein sequence ID" value="AAH26165.1"/>
    <property type="molecule type" value="mRNA"/>
</dbReference>
<dbReference type="CCDS" id="CCDS7146.1"/>
<dbReference type="RefSeq" id="NP_001257312.1">
    <property type="nucleotide sequence ID" value="NM_001270383.1"/>
</dbReference>
<dbReference type="RefSeq" id="NP_659447.1">
    <property type="nucleotide sequence ID" value="NM_145010.4"/>
</dbReference>
<dbReference type="RefSeq" id="XP_011517650.1">
    <property type="nucleotide sequence ID" value="XM_011519348.1"/>
</dbReference>
<dbReference type="PDB" id="7UNG">
    <property type="method" value="EM"/>
    <property type="resolution" value="3.60 A"/>
    <property type="chains" value="h/i/j/k=1-256"/>
</dbReference>
<dbReference type="PDB" id="8J07">
    <property type="method" value="EM"/>
    <property type="resolution" value="4.10 A"/>
    <property type="chains" value="3O/3P/3Q/3R/3S/3T/3U=1-256"/>
</dbReference>
<dbReference type="PDBsum" id="7UNG"/>
<dbReference type="PDBsum" id="8J07"/>
<dbReference type="EMDB" id="EMD-26624"/>
<dbReference type="EMDB" id="EMD-35888"/>
<dbReference type="SMR" id="Q8TC29"/>
<dbReference type="BioGRID" id="128562">
    <property type="interactions" value="13"/>
</dbReference>
<dbReference type="FunCoup" id="Q8TC29">
    <property type="interactions" value="94"/>
</dbReference>
<dbReference type="IntAct" id="Q8TC29">
    <property type="interactions" value="16"/>
</dbReference>
<dbReference type="MINT" id="Q8TC29"/>
<dbReference type="STRING" id="9606.ENSP00000331044"/>
<dbReference type="iPTMnet" id="Q8TC29"/>
<dbReference type="PhosphoSitePlus" id="Q8TC29"/>
<dbReference type="BioMuta" id="ENKUR"/>
<dbReference type="DMDM" id="71151870"/>
<dbReference type="MassIVE" id="Q8TC29"/>
<dbReference type="PaxDb" id="9606-ENSP00000331044"/>
<dbReference type="PeptideAtlas" id="Q8TC29"/>
<dbReference type="ProteomicsDB" id="74085"/>
<dbReference type="Antibodypedia" id="25866">
    <property type="antibodies" value="234 antibodies from 20 providers"/>
</dbReference>
<dbReference type="DNASU" id="219670"/>
<dbReference type="Ensembl" id="ENST00000331161.9">
    <property type="protein sequence ID" value="ENSP00000331044.4"/>
    <property type="gene ID" value="ENSG00000151023.17"/>
</dbReference>
<dbReference type="Ensembl" id="ENST00000496261.6">
    <property type="protein sequence ID" value="ENSP00000432930.1"/>
    <property type="gene ID" value="ENSG00000151023.17"/>
</dbReference>
<dbReference type="GeneID" id="219670"/>
<dbReference type="KEGG" id="hsa:219670"/>
<dbReference type="MANE-Select" id="ENST00000331161.9">
    <property type="protein sequence ID" value="ENSP00000331044.4"/>
    <property type="RefSeq nucleotide sequence ID" value="NM_145010.4"/>
    <property type="RefSeq protein sequence ID" value="NP_659447.1"/>
</dbReference>
<dbReference type="UCSC" id="uc001isg.2">
    <property type="organism name" value="human"/>
</dbReference>
<dbReference type="AGR" id="HGNC:28388"/>
<dbReference type="CTD" id="219670"/>
<dbReference type="DisGeNET" id="219670"/>
<dbReference type="GeneCards" id="ENKUR"/>
<dbReference type="HGNC" id="HGNC:28388">
    <property type="gene designation" value="ENKUR"/>
</dbReference>
<dbReference type="HPA" id="ENSG00000151023">
    <property type="expression patterns" value="Tissue enhanced (brain, choroid plexus, fallopian tube)"/>
</dbReference>
<dbReference type="MIM" id="611025">
    <property type="type" value="gene"/>
</dbReference>
<dbReference type="neXtProt" id="NX_Q8TC29"/>
<dbReference type="OpenTargets" id="ENSG00000151023"/>
<dbReference type="PharmGKB" id="PA165548526"/>
<dbReference type="VEuPathDB" id="HostDB:ENSG00000151023"/>
<dbReference type="eggNOG" id="ENOG502QT8E">
    <property type="taxonomic scope" value="Eukaryota"/>
</dbReference>
<dbReference type="GeneTree" id="ENSGT00940000153866"/>
<dbReference type="InParanoid" id="Q8TC29"/>
<dbReference type="OMA" id="HRVIYIA"/>
<dbReference type="OrthoDB" id="2123594at2759"/>
<dbReference type="PAN-GO" id="Q8TC29">
    <property type="GO annotations" value="2 GO annotations based on evolutionary models"/>
</dbReference>
<dbReference type="PhylomeDB" id="Q8TC29"/>
<dbReference type="TreeFam" id="TF323892"/>
<dbReference type="PathwayCommons" id="Q8TC29"/>
<dbReference type="SignaLink" id="Q8TC29"/>
<dbReference type="BioGRID-ORCS" id="219670">
    <property type="hits" value="12 hits in 1143 CRISPR screens"/>
</dbReference>
<dbReference type="ChiTaRS" id="ENKUR">
    <property type="organism name" value="human"/>
</dbReference>
<dbReference type="GeneWiki" id="Enkurin"/>
<dbReference type="GenomeRNAi" id="219670"/>
<dbReference type="Pharos" id="Q8TC29">
    <property type="development level" value="Tbio"/>
</dbReference>
<dbReference type="PRO" id="PR:Q8TC29"/>
<dbReference type="Proteomes" id="UP000005640">
    <property type="component" value="Chromosome 10"/>
</dbReference>
<dbReference type="RNAct" id="Q8TC29">
    <property type="molecule type" value="protein"/>
</dbReference>
<dbReference type="Bgee" id="ENSG00000151023">
    <property type="expression patterns" value="Expressed in bronchial epithelial cell and 111 other cell types or tissues"/>
</dbReference>
<dbReference type="ExpressionAtlas" id="Q8TC29">
    <property type="expression patterns" value="baseline and differential"/>
</dbReference>
<dbReference type="GO" id="GO:0097728">
    <property type="term" value="C:9+0 motile cilium"/>
    <property type="evidence" value="ECO:0007669"/>
    <property type="project" value="Ensembl"/>
</dbReference>
<dbReference type="GO" id="GO:0097729">
    <property type="term" value="C:9+2 motile cilium"/>
    <property type="evidence" value="ECO:0000314"/>
    <property type="project" value="GO_Central"/>
</dbReference>
<dbReference type="GO" id="GO:0001669">
    <property type="term" value="C:acrosomal vesicle"/>
    <property type="evidence" value="ECO:0000318"/>
    <property type="project" value="GO_Central"/>
</dbReference>
<dbReference type="GO" id="GO:0160112">
    <property type="term" value="C:axonemal B tubule inner sheath"/>
    <property type="evidence" value="ECO:0000250"/>
    <property type="project" value="UniProtKB"/>
</dbReference>
<dbReference type="GO" id="GO:0005879">
    <property type="term" value="C:axonemal microtubule"/>
    <property type="evidence" value="ECO:0000314"/>
    <property type="project" value="UniProtKB"/>
</dbReference>
<dbReference type="GO" id="GO:0036126">
    <property type="term" value="C:sperm flagellum"/>
    <property type="evidence" value="ECO:0000250"/>
    <property type="project" value="UniProtKB"/>
</dbReference>
<dbReference type="GO" id="GO:0097228">
    <property type="term" value="C:sperm principal piece"/>
    <property type="evidence" value="ECO:0007669"/>
    <property type="project" value="Ensembl"/>
</dbReference>
<dbReference type="GO" id="GO:0005516">
    <property type="term" value="F:calmodulin binding"/>
    <property type="evidence" value="ECO:0000318"/>
    <property type="project" value="GO_Central"/>
</dbReference>
<dbReference type="GO" id="GO:0017124">
    <property type="term" value="F:SH3 domain binding"/>
    <property type="evidence" value="ECO:0007669"/>
    <property type="project" value="UniProtKB-KW"/>
</dbReference>
<dbReference type="GO" id="GO:0061966">
    <property type="term" value="P:establishment of left/right asymmetry"/>
    <property type="evidence" value="ECO:0000314"/>
    <property type="project" value="GO_Central"/>
</dbReference>
<dbReference type="GO" id="GO:0030317">
    <property type="term" value="P:flagellated sperm motility"/>
    <property type="evidence" value="ECO:0000250"/>
    <property type="project" value="UniProtKB"/>
</dbReference>
<dbReference type="InterPro" id="IPR027012">
    <property type="entry name" value="Enkurin_dom"/>
</dbReference>
<dbReference type="InterPro" id="IPR052102">
    <property type="entry name" value="Enkurin_domain-protein"/>
</dbReference>
<dbReference type="PANTHER" id="PTHR21490:SF0">
    <property type="entry name" value="ENKURIN"/>
    <property type="match status" value="1"/>
</dbReference>
<dbReference type="PANTHER" id="PTHR21490">
    <property type="entry name" value="ENKURIN-RELATED"/>
    <property type="match status" value="1"/>
</dbReference>
<dbReference type="Pfam" id="PF13864">
    <property type="entry name" value="Enkurin"/>
    <property type="match status" value="1"/>
</dbReference>
<dbReference type="PROSITE" id="PS51665">
    <property type="entry name" value="ENKURIN"/>
    <property type="match status" value="1"/>
</dbReference>
<protein>
    <recommendedName>
        <fullName>Enkurin</fullName>
    </recommendedName>
</protein>